<organism>
    <name type="scientific">Chlorobium phaeovibrioides (strain DSM 265 / 1930)</name>
    <name type="common">Prosthecochloris vibrioformis (strain DSM 265)</name>
    <dbReference type="NCBI Taxonomy" id="290318"/>
    <lineage>
        <taxon>Bacteria</taxon>
        <taxon>Pseudomonadati</taxon>
        <taxon>Chlorobiota</taxon>
        <taxon>Chlorobiia</taxon>
        <taxon>Chlorobiales</taxon>
        <taxon>Chlorobiaceae</taxon>
        <taxon>Chlorobium/Pelodictyon group</taxon>
        <taxon>Chlorobium</taxon>
    </lineage>
</organism>
<keyword id="KW-0687">Ribonucleoprotein</keyword>
<keyword id="KW-0689">Ribosomal protein</keyword>
<keyword id="KW-0694">RNA-binding</keyword>
<keyword id="KW-0699">rRNA-binding</keyword>
<feature type="chain" id="PRO_1000086811" description="Small ribosomal subunit protein uS15">
    <location>
        <begin position="1"/>
        <end position="89"/>
    </location>
</feature>
<name>RS15_CHLPM</name>
<accession>A4SGF8</accession>
<reference key="1">
    <citation type="submission" date="2007-03" db="EMBL/GenBank/DDBJ databases">
        <title>Complete sequence of Prosthecochloris vibrioformis DSM 265.</title>
        <authorList>
            <consortium name="US DOE Joint Genome Institute"/>
            <person name="Copeland A."/>
            <person name="Lucas S."/>
            <person name="Lapidus A."/>
            <person name="Barry K."/>
            <person name="Detter J.C."/>
            <person name="Glavina del Rio T."/>
            <person name="Hammon N."/>
            <person name="Israni S."/>
            <person name="Pitluck S."/>
            <person name="Schmutz J."/>
            <person name="Larimer F."/>
            <person name="Land M."/>
            <person name="Hauser L."/>
            <person name="Mikhailova N."/>
            <person name="Li T."/>
            <person name="Overmann J."/>
            <person name="Schuster S.C."/>
            <person name="Bryant D.A."/>
            <person name="Richardson P."/>
        </authorList>
    </citation>
    <scope>NUCLEOTIDE SEQUENCE [LARGE SCALE GENOMIC DNA]</scope>
    <source>
        <strain>DSM 265 / 1930</strain>
    </source>
</reference>
<sequence>MSLSKEFKEEIITKFGGTDKNTGKAEVQVALFSNRISDLTGHLQKHPKDKHSRRGLLMLVSKRKKALKYLQNVAIDRYRQVIADLDLRK</sequence>
<gene>
    <name evidence="1" type="primary">rpsO</name>
    <name type="ordered locus">Cvib_1557</name>
</gene>
<dbReference type="EMBL" id="CP000607">
    <property type="protein sequence ID" value="ABP37567.1"/>
    <property type="molecule type" value="Genomic_DNA"/>
</dbReference>
<dbReference type="SMR" id="A4SGF8"/>
<dbReference type="STRING" id="290318.Cvib_1557"/>
<dbReference type="KEGG" id="pvi:Cvib_1557"/>
<dbReference type="eggNOG" id="COG0184">
    <property type="taxonomic scope" value="Bacteria"/>
</dbReference>
<dbReference type="HOGENOM" id="CLU_148518_0_0_10"/>
<dbReference type="OrthoDB" id="9799262at2"/>
<dbReference type="GO" id="GO:0022627">
    <property type="term" value="C:cytosolic small ribosomal subunit"/>
    <property type="evidence" value="ECO:0007669"/>
    <property type="project" value="TreeGrafter"/>
</dbReference>
<dbReference type="GO" id="GO:0019843">
    <property type="term" value="F:rRNA binding"/>
    <property type="evidence" value="ECO:0007669"/>
    <property type="project" value="UniProtKB-UniRule"/>
</dbReference>
<dbReference type="GO" id="GO:0003735">
    <property type="term" value="F:structural constituent of ribosome"/>
    <property type="evidence" value="ECO:0007669"/>
    <property type="project" value="InterPro"/>
</dbReference>
<dbReference type="GO" id="GO:0006412">
    <property type="term" value="P:translation"/>
    <property type="evidence" value="ECO:0007669"/>
    <property type="project" value="UniProtKB-UniRule"/>
</dbReference>
<dbReference type="CDD" id="cd00353">
    <property type="entry name" value="Ribosomal_S15p_S13e"/>
    <property type="match status" value="1"/>
</dbReference>
<dbReference type="FunFam" id="1.10.287.10:FF:000002">
    <property type="entry name" value="30S ribosomal protein S15"/>
    <property type="match status" value="1"/>
</dbReference>
<dbReference type="Gene3D" id="6.10.250.3130">
    <property type="match status" value="1"/>
</dbReference>
<dbReference type="Gene3D" id="1.10.287.10">
    <property type="entry name" value="S15/NS1, RNA-binding"/>
    <property type="match status" value="1"/>
</dbReference>
<dbReference type="HAMAP" id="MF_01343_B">
    <property type="entry name" value="Ribosomal_uS15_B"/>
    <property type="match status" value="1"/>
</dbReference>
<dbReference type="InterPro" id="IPR000589">
    <property type="entry name" value="Ribosomal_uS15"/>
</dbReference>
<dbReference type="InterPro" id="IPR005290">
    <property type="entry name" value="Ribosomal_uS15_bac-type"/>
</dbReference>
<dbReference type="InterPro" id="IPR009068">
    <property type="entry name" value="uS15_NS1_RNA-bd_sf"/>
</dbReference>
<dbReference type="NCBIfam" id="TIGR00952">
    <property type="entry name" value="S15_bact"/>
    <property type="match status" value="1"/>
</dbReference>
<dbReference type="PANTHER" id="PTHR23321">
    <property type="entry name" value="RIBOSOMAL PROTEIN S15, BACTERIAL AND ORGANELLAR"/>
    <property type="match status" value="1"/>
</dbReference>
<dbReference type="PANTHER" id="PTHR23321:SF26">
    <property type="entry name" value="SMALL RIBOSOMAL SUBUNIT PROTEIN US15M"/>
    <property type="match status" value="1"/>
</dbReference>
<dbReference type="Pfam" id="PF00312">
    <property type="entry name" value="Ribosomal_S15"/>
    <property type="match status" value="1"/>
</dbReference>
<dbReference type="SMART" id="SM01387">
    <property type="entry name" value="Ribosomal_S15"/>
    <property type="match status" value="1"/>
</dbReference>
<dbReference type="SUPFAM" id="SSF47060">
    <property type="entry name" value="S15/NS1 RNA-binding domain"/>
    <property type="match status" value="1"/>
</dbReference>
<evidence type="ECO:0000255" key="1">
    <source>
        <dbReference type="HAMAP-Rule" id="MF_01343"/>
    </source>
</evidence>
<evidence type="ECO:0000305" key="2"/>
<protein>
    <recommendedName>
        <fullName evidence="1">Small ribosomal subunit protein uS15</fullName>
    </recommendedName>
    <alternativeName>
        <fullName evidence="2">30S ribosomal protein S15</fullName>
    </alternativeName>
</protein>
<proteinExistence type="inferred from homology"/>
<comment type="function">
    <text evidence="1">One of the primary rRNA binding proteins, it binds directly to 16S rRNA where it helps nucleate assembly of the platform of the 30S subunit by binding and bridging several RNA helices of the 16S rRNA.</text>
</comment>
<comment type="function">
    <text evidence="1">Forms an intersubunit bridge (bridge B4) with the 23S rRNA of the 50S subunit in the ribosome.</text>
</comment>
<comment type="subunit">
    <text evidence="1">Part of the 30S ribosomal subunit. Forms a bridge to the 50S subunit in the 70S ribosome, contacting the 23S rRNA.</text>
</comment>
<comment type="similarity">
    <text evidence="1">Belongs to the universal ribosomal protein uS15 family.</text>
</comment>